<reference key="1">
    <citation type="submission" date="2007-11" db="EMBL/GenBank/DDBJ databases">
        <authorList>
            <consortium name="The Salmonella enterica serovar Arizonae Genome Sequencing Project"/>
            <person name="McClelland M."/>
            <person name="Sanderson E.K."/>
            <person name="Porwollik S."/>
            <person name="Spieth J."/>
            <person name="Clifton W.S."/>
            <person name="Fulton R."/>
            <person name="Chunyan W."/>
            <person name="Wollam A."/>
            <person name="Shah N."/>
            <person name="Pepin K."/>
            <person name="Bhonagiri V."/>
            <person name="Nash W."/>
            <person name="Johnson M."/>
            <person name="Thiruvilangam P."/>
            <person name="Wilson R."/>
        </authorList>
    </citation>
    <scope>NUCLEOTIDE SEQUENCE [LARGE SCALE GENOMIC DNA]</scope>
    <source>
        <strain>ATCC BAA-731 / CDC346-86 / RSK2980</strain>
    </source>
</reference>
<evidence type="ECO:0000255" key="1">
    <source>
        <dbReference type="HAMAP-Rule" id="MF_00823"/>
    </source>
</evidence>
<evidence type="ECO:0000255" key="2">
    <source>
        <dbReference type="PROSITE-ProRule" id="PRU01137"/>
    </source>
</evidence>
<organism>
    <name type="scientific">Salmonella arizonae (strain ATCC BAA-731 / CDC346-86 / RSK2980)</name>
    <dbReference type="NCBI Taxonomy" id="41514"/>
    <lineage>
        <taxon>Bacteria</taxon>
        <taxon>Pseudomonadati</taxon>
        <taxon>Pseudomonadota</taxon>
        <taxon>Gammaproteobacteria</taxon>
        <taxon>Enterobacterales</taxon>
        <taxon>Enterobacteriaceae</taxon>
        <taxon>Salmonella</taxon>
    </lineage>
</organism>
<protein>
    <recommendedName>
        <fullName evidence="1">Acetyl-coenzyme A carboxylase carboxyl transferase subunit alpha</fullName>
        <shortName evidence="1">ACCase subunit alpha</shortName>
        <shortName evidence="1">Acetyl-CoA carboxylase carboxyltransferase subunit alpha</shortName>
        <ecNumber evidence="1">2.1.3.15</ecNumber>
    </recommendedName>
</protein>
<dbReference type="EC" id="2.1.3.15" evidence="1"/>
<dbReference type="EMBL" id="CP000880">
    <property type="protein sequence ID" value="ABX22619.1"/>
    <property type="molecule type" value="Genomic_DNA"/>
</dbReference>
<dbReference type="SMR" id="A9MPH6"/>
<dbReference type="STRING" id="41514.SARI_02770"/>
<dbReference type="KEGG" id="ses:SARI_02770"/>
<dbReference type="HOGENOM" id="CLU_015486_0_2_6"/>
<dbReference type="UniPathway" id="UPA00655">
    <property type="reaction ID" value="UER00711"/>
</dbReference>
<dbReference type="Proteomes" id="UP000002084">
    <property type="component" value="Chromosome"/>
</dbReference>
<dbReference type="GO" id="GO:0009317">
    <property type="term" value="C:acetyl-CoA carboxylase complex"/>
    <property type="evidence" value="ECO:0007669"/>
    <property type="project" value="InterPro"/>
</dbReference>
<dbReference type="GO" id="GO:0003989">
    <property type="term" value="F:acetyl-CoA carboxylase activity"/>
    <property type="evidence" value="ECO:0007669"/>
    <property type="project" value="InterPro"/>
</dbReference>
<dbReference type="GO" id="GO:0005524">
    <property type="term" value="F:ATP binding"/>
    <property type="evidence" value="ECO:0007669"/>
    <property type="project" value="UniProtKB-KW"/>
</dbReference>
<dbReference type="GO" id="GO:0016743">
    <property type="term" value="F:carboxyl- or carbamoyltransferase activity"/>
    <property type="evidence" value="ECO:0007669"/>
    <property type="project" value="UniProtKB-UniRule"/>
</dbReference>
<dbReference type="GO" id="GO:0006633">
    <property type="term" value="P:fatty acid biosynthetic process"/>
    <property type="evidence" value="ECO:0007669"/>
    <property type="project" value="UniProtKB-KW"/>
</dbReference>
<dbReference type="GO" id="GO:2001295">
    <property type="term" value="P:malonyl-CoA biosynthetic process"/>
    <property type="evidence" value="ECO:0007669"/>
    <property type="project" value="UniProtKB-UniRule"/>
</dbReference>
<dbReference type="FunFam" id="3.90.226.10:FF:000008">
    <property type="entry name" value="Acetyl-coenzyme A carboxylase carboxyl transferase subunit alpha"/>
    <property type="match status" value="1"/>
</dbReference>
<dbReference type="Gene3D" id="3.90.226.10">
    <property type="entry name" value="2-enoyl-CoA Hydratase, Chain A, domain 1"/>
    <property type="match status" value="1"/>
</dbReference>
<dbReference type="HAMAP" id="MF_00823">
    <property type="entry name" value="AcetylCoA_CT_alpha"/>
    <property type="match status" value="1"/>
</dbReference>
<dbReference type="InterPro" id="IPR001095">
    <property type="entry name" value="Acetyl_CoA_COase_a_su"/>
</dbReference>
<dbReference type="InterPro" id="IPR029045">
    <property type="entry name" value="ClpP/crotonase-like_dom_sf"/>
</dbReference>
<dbReference type="InterPro" id="IPR011763">
    <property type="entry name" value="COA_CT_C"/>
</dbReference>
<dbReference type="NCBIfam" id="TIGR00513">
    <property type="entry name" value="accA"/>
    <property type="match status" value="1"/>
</dbReference>
<dbReference type="NCBIfam" id="NF041504">
    <property type="entry name" value="AccA_sub"/>
    <property type="match status" value="1"/>
</dbReference>
<dbReference type="NCBIfam" id="NF004344">
    <property type="entry name" value="PRK05724.1"/>
    <property type="match status" value="1"/>
</dbReference>
<dbReference type="PANTHER" id="PTHR42853">
    <property type="entry name" value="ACETYL-COENZYME A CARBOXYLASE CARBOXYL TRANSFERASE SUBUNIT ALPHA"/>
    <property type="match status" value="1"/>
</dbReference>
<dbReference type="PANTHER" id="PTHR42853:SF3">
    <property type="entry name" value="ACETYL-COENZYME A CARBOXYLASE CARBOXYL TRANSFERASE SUBUNIT ALPHA, CHLOROPLASTIC"/>
    <property type="match status" value="1"/>
</dbReference>
<dbReference type="Pfam" id="PF03255">
    <property type="entry name" value="ACCA"/>
    <property type="match status" value="1"/>
</dbReference>
<dbReference type="PRINTS" id="PR01069">
    <property type="entry name" value="ACCCTRFRASEA"/>
</dbReference>
<dbReference type="SUPFAM" id="SSF52096">
    <property type="entry name" value="ClpP/crotonase"/>
    <property type="match status" value="1"/>
</dbReference>
<dbReference type="PROSITE" id="PS50989">
    <property type="entry name" value="COA_CT_CTER"/>
    <property type="match status" value="1"/>
</dbReference>
<proteinExistence type="inferred from homology"/>
<name>ACCA_SALAR</name>
<comment type="function">
    <text evidence="1">Component of the acetyl coenzyme A carboxylase (ACC) complex. First, biotin carboxylase catalyzes the carboxylation of biotin on its carrier protein (BCCP) and then the CO(2) group is transferred by the carboxyltransferase to acetyl-CoA to form malonyl-CoA.</text>
</comment>
<comment type="catalytic activity">
    <reaction evidence="1">
        <text>N(6)-carboxybiotinyl-L-lysyl-[protein] + acetyl-CoA = N(6)-biotinyl-L-lysyl-[protein] + malonyl-CoA</text>
        <dbReference type="Rhea" id="RHEA:54728"/>
        <dbReference type="Rhea" id="RHEA-COMP:10505"/>
        <dbReference type="Rhea" id="RHEA-COMP:10506"/>
        <dbReference type="ChEBI" id="CHEBI:57288"/>
        <dbReference type="ChEBI" id="CHEBI:57384"/>
        <dbReference type="ChEBI" id="CHEBI:83144"/>
        <dbReference type="ChEBI" id="CHEBI:83145"/>
        <dbReference type="EC" id="2.1.3.15"/>
    </reaction>
</comment>
<comment type="pathway">
    <text evidence="1">Lipid metabolism; malonyl-CoA biosynthesis; malonyl-CoA from acetyl-CoA: step 1/1.</text>
</comment>
<comment type="subunit">
    <text evidence="1">Acetyl-CoA carboxylase is a heterohexamer composed of biotin carboxyl carrier protein (AccB), biotin carboxylase (AccC) and two subunits each of ACCase subunit alpha (AccA) and ACCase subunit beta (AccD).</text>
</comment>
<comment type="subcellular location">
    <subcellularLocation>
        <location evidence="1">Cytoplasm</location>
    </subcellularLocation>
</comment>
<comment type="similarity">
    <text evidence="1">Belongs to the AccA family.</text>
</comment>
<gene>
    <name evidence="1" type="primary">accA</name>
    <name type="ordered locus">SARI_02770</name>
</gene>
<sequence>MSLNFLDFEQPIAELEAKIDSLTAVSRQDEKLDINIDEEVHRLREKSVELTRKIFADLGAWQVAQLARHPQRPYTLDYVRLAFDEFDELAGDRAYADDKAIVGGIARLEGRPVMVIGHQKGRETKEKIRRNFGMPAPEGYRKALRLMEMAERFNMPIITFIDTPGAYPGVGAEERGQSEAIARNLREMSRLNVPIICTVIGEGGSGGALAIGVGDKVNMLQYSTYSVISPEGCASILWKSADKAPLAAEAMGIIAPRLKELKLIDSIIPEPLGGAHRNPEVMAASLKAQLLEDLADLDVLSTDDLKNRRYQRLMSYGYA</sequence>
<feature type="chain" id="PRO_1000083934" description="Acetyl-coenzyme A carboxylase carboxyl transferase subunit alpha">
    <location>
        <begin position="1"/>
        <end position="319"/>
    </location>
</feature>
<feature type="domain" description="CoA carboxyltransferase C-terminal" evidence="2">
    <location>
        <begin position="35"/>
        <end position="296"/>
    </location>
</feature>
<accession>A9MPH6</accession>
<keyword id="KW-0067">ATP-binding</keyword>
<keyword id="KW-0963">Cytoplasm</keyword>
<keyword id="KW-0275">Fatty acid biosynthesis</keyword>
<keyword id="KW-0276">Fatty acid metabolism</keyword>
<keyword id="KW-0444">Lipid biosynthesis</keyword>
<keyword id="KW-0443">Lipid metabolism</keyword>
<keyword id="KW-0547">Nucleotide-binding</keyword>
<keyword id="KW-1185">Reference proteome</keyword>
<keyword id="KW-0808">Transferase</keyword>